<protein>
    <recommendedName>
        <fullName>Integrator complex subunit 4</fullName>
        <shortName>Int4</shortName>
    </recommendedName>
</protein>
<proteinExistence type="evidence at protein level"/>
<comment type="function">
    <text evidence="1">Component of the integrator complex, a multiprotein complex that terminates RNA polymerase II (Pol II) transcription in the promoter-proximal region of genes. The integrator complex provides a quality checkpoint during transcription elongation by driving premature transcription termination of transcripts that are unfavorably configured for transcriptional elongation: the complex terminates transcription by (1) catalyzing dephosphorylation of the C-terminal domain (CTD) of Pol II subunit POLR2A/RPB1 and SUPT5H/SPT5, (2) degrading the exiting nascent RNA transcript via endonuclease activity and (3) promoting the release of Pol II from bound DNA. The integrator complex is also involved in terminating the synthesis of non-coding Pol II transcripts, such as enhancer RNAs (eRNAs), small nuclear RNAs (snRNAs), telomerase RNAs and long non-coding RNAs (lncRNAs). Within the integrator complex, INTS4 acts as an scaffold that links INTS9 and INTS11. Mediates recruitment of cytoplasmic dynein to the nuclear envelope, probably as component of the integrator complex.</text>
</comment>
<comment type="subunit">
    <text evidence="1">Component of the Integrator complex, composed of core subunits INTS1, INTS2, INTS3, INTS4, INTS5, INTS6, INTS7, INTS8, INTS9/RC74, INTS10, INTS11/CPSF3L, INTS12, INTS13, INTS14 and INTS15. The core complex associates with protein phosphatase 2A subunits PPP2CA and PPP2R1A, to form the Integrator-PP2A (INTAC) complex. INTS4 is part of the RNA endonuclease subcomplex, composed of INTS4, INTS9, INTS11 and inositol hexakisphosphate (InsP6). Interacts with BRAT1; interaction is required for the assembly of the RNA endonuclease subcomplex.</text>
</comment>
<comment type="subcellular location">
    <subcellularLocation>
        <location evidence="1">Nucleus</location>
    </subcellularLocation>
    <subcellularLocation>
        <location evidence="1">Cytoplasm</location>
    </subcellularLocation>
</comment>
<comment type="alternative products">
    <event type="alternative splicing"/>
    <isoform>
        <id>Q8CIM8-1</id>
        <name>1</name>
        <sequence type="displayed"/>
    </isoform>
    <isoform>
        <id>Q8CIM8-2</id>
        <name>2</name>
        <sequence type="described" ref="VSP_021456"/>
    </isoform>
    <isoform>
        <id>Q8CIM8-3</id>
        <name>3</name>
        <sequence type="described" ref="VSP_021454 VSP_021455"/>
    </isoform>
</comment>
<comment type="similarity">
    <text evidence="3">Belongs to the Integrator subunit 4 family.</text>
</comment>
<comment type="sequence caution" evidence="3">
    <conflict type="erroneous initiation">
        <sequence resource="EMBL-CDS" id="AAH13813"/>
    </conflict>
    <text>Truncated N-terminus.</text>
</comment>
<comment type="sequence caution" evidence="3">
    <conflict type="frameshift">
        <sequence resource="EMBL-CDS" id="BAE37328"/>
    </conflict>
</comment>
<feature type="chain" id="PRO_0000259539" description="Integrator complex subunit 4">
    <location>
        <begin position="1"/>
        <end position="964"/>
    </location>
</feature>
<feature type="repeat" description="HEAT 1">
    <location>
        <begin position="67"/>
        <end position="106"/>
    </location>
</feature>
<feature type="repeat" description="HEAT 2">
    <location>
        <begin position="146"/>
        <end position="184"/>
    </location>
</feature>
<feature type="repeat" description="HEAT 3">
    <location>
        <begin position="191"/>
        <end position="229"/>
    </location>
</feature>
<feature type="repeat" description="HEAT 4">
    <location>
        <begin position="230"/>
        <end position="264"/>
    </location>
</feature>
<feature type="repeat" description="HEAT 5">
    <location>
        <begin position="278"/>
        <end position="314"/>
    </location>
</feature>
<feature type="repeat" description="HEAT 6">
    <location>
        <begin position="370"/>
        <end position="406"/>
    </location>
</feature>
<feature type="repeat" description="HEAT 7">
    <location>
        <begin position="407"/>
        <end position="445"/>
    </location>
</feature>
<feature type="repeat" description="HEAT 8">
    <location>
        <begin position="447"/>
        <end position="485"/>
    </location>
</feature>
<feature type="modified residue" description="N6-acetyllysine" evidence="4">
    <location>
        <position position="27"/>
    </location>
</feature>
<feature type="cross-link" description="Glycyl lysine isopeptide (Lys-Gly) (interchain with G-Cter in SUMO1); alternate" evidence="1">
    <location>
        <position position="792"/>
    </location>
</feature>
<feature type="cross-link" description="Glycyl lysine isopeptide (Lys-Gly) (interchain with G-Cter in SUMO2); alternate" evidence="1">
    <location>
        <position position="792"/>
    </location>
</feature>
<feature type="splice variant" id="VSP_021454" description="In isoform 3." evidence="2">
    <original>LQL</original>
    <variation>VTG</variation>
    <location>
        <begin position="221"/>
        <end position="223"/>
    </location>
</feature>
<feature type="splice variant" id="VSP_021455" description="In isoform 3." evidence="2">
    <location>
        <begin position="224"/>
        <end position="964"/>
    </location>
</feature>
<feature type="splice variant" id="VSP_021456" description="In isoform 2." evidence="2">
    <location>
        <begin position="507"/>
        <end position="964"/>
    </location>
</feature>
<organism>
    <name type="scientific">Mus musculus</name>
    <name type="common">Mouse</name>
    <dbReference type="NCBI Taxonomy" id="10090"/>
    <lineage>
        <taxon>Eukaryota</taxon>
        <taxon>Metazoa</taxon>
        <taxon>Chordata</taxon>
        <taxon>Craniata</taxon>
        <taxon>Vertebrata</taxon>
        <taxon>Euteleostomi</taxon>
        <taxon>Mammalia</taxon>
        <taxon>Eutheria</taxon>
        <taxon>Euarchontoglires</taxon>
        <taxon>Glires</taxon>
        <taxon>Rodentia</taxon>
        <taxon>Myomorpha</taxon>
        <taxon>Muroidea</taxon>
        <taxon>Muridae</taxon>
        <taxon>Murinae</taxon>
        <taxon>Mus</taxon>
        <taxon>Mus</taxon>
    </lineage>
</organism>
<dbReference type="EMBL" id="AK011676">
    <property type="protein sequence ID" value="BAB27773.1"/>
    <property type="molecule type" value="mRNA"/>
</dbReference>
<dbReference type="EMBL" id="AK088635">
    <property type="protein sequence ID" value="BAC40468.1"/>
    <property type="molecule type" value="mRNA"/>
</dbReference>
<dbReference type="EMBL" id="AK163383">
    <property type="protein sequence ID" value="BAE37328.1"/>
    <property type="status" value="ALT_FRAME"/>
    <property type="molecule type" value="mRNA"/>
</dbReference>
<dbReference type="EMBL" id="BC013710">
    <property type="protein sequence ID" value="AAH13710.1"/>
    <property type="molecule type" value="mRNA"/>
</dbReference>
<dbReference type="EMBL" id="BC013813">
    <property type="protein sequence ID" value="AAH13813.1"/>
    <property type="status" value="ALT_INIT"/>
    <property type="molecule type" value="mRNA"/>
</dbReference>
<dbReference type="CCDS" id="CCDS21460.1">
    <molecule id="Q8CIM8-1"/>
</dbReference>
<dbReference type="RefSeq" id="NP_081532.1">
    <molecule id="Q8CIM8-1"/>
    <property type="nucleotide sequence ID" value="NM_027256.2"/>
</dbReference>
<dbReference type="SMR" id="Q8CIM8"/>
<dbReference type="BioGRID" id="221739">
    <property type="interactions" value="21"/>
</dbReference>
<dbReference type="FunCoup" id="Q8CIM8">
    <property type="interactions" value="4978"/>
</dbReference>
<dbReference type="IntAct" id="Q8CIM8">
    <property type="interactions" value="9"/>
</dbReference>
<dbReference type="MINT" id="Q8CIM8"/>
<dbReference type="STRING" id="10090.ENSMUSP00000026126"/>
<dbReference type="iPTMnet" id="Q8CIM8"/>
<dbReference type="PhosphoSitePlus" id="Q8CIM8"/>
<dbReference type="SwissPalm" id="Q8CIM8"/>
<dbReference type="PaxDb" id="10090-ENSMUSP00000026126"/>
<dbReference type="PeptideAtlas" id="Q8CIM8"/>
<dbReference type="ProteomicsDB" id="269492">
    <molecule id="Q8CIM8-1"/>
</dbReference>
<dbReference type="ProteomicsDB" id="269493">
    <molecule id="Q8CIM8-2"/>
</dbReference>
<dbReference type="ProteomicsDB" id="269494">
    <molecule id="Q8CIM8-3"/>
</dbReference>
<dbReference type="Pumba" id="Q8CIM8"/>
<dbReference type="Antibodypedia" id="31280">
    <property type="antibodies" value="132 antibodies from 27 providers"/>
</dbReference>
<dbReference type="DNASU" id="101861"/>
<dbReference type="Ensembl" id="ENSMUST00000026126.10">
    <molecule id="Q8CIM8-1"/>
    <property type="protein sequence ID" value="ENSMUSP00000026126.9"/>
    <property type="gene ID" value="ENSMUSG00000025133.10"/>
</dbReference>
<dbReference type="GeneID" id="101861"/>
<dbReference type="KEGG" id="mmu:101861"/>
<dbReference type="UCSC" id="uc009ijg.2">
    <molecule id="Q8CIM8-3"/>
    <property type="organism name" value="mouse"/>
</dbReference>
<dbReference type="UCSC" id="uc009ijh.2">
    <molecule id="Q8CIM8-1"/>
    <property type="organism name" value="mouse"/>
</dbReference>
<dbReference type="AGR" id="MGI:1917164"/>
<dbReference type="CTD" id="92105"/>
<dbReference type="MGI" id="MGI:1917164">
    <property type="gene designation" value="Ints4"/>
</dbReference>
<dbReference type="VEuPathDB" id="HostDB:ENSMUSG00000025133"/>
<dbReference type="eggNOG" id="KOG2259">
    <property type="taxonomic scope" value="Eukaryota"/>
</dbReference>
<dbReference type="GeneTree" id="ENSGT00390000010128"/>
<dbReference type="HOGENOM" id="CLU_012910_1_0_1"/>
<dbReference type="InParanoid" id="Q8CIM8"/>
<dbReference type="OMA" id="GNRHPDY"/>
<dbReference type="OrthoDB" id="18190at2759"/>
<dbReference type="PhylomeDB" id="Q8CIM8"/>
<dbReference type="TreeFam" id="TF315047"/>
<dbReference type="Reactome" id="R-MMU-6807505">
    <property type="pathway name" value="RNA polymerase II transcribes snRNA genes"/>
</dbReference>
<dbReference type="BioGRID-ORCS" id="101861">
    <property type="hits" value="26 hits in 84 CRISPR screens"/>
</dbReference>
<dbReference type="ChiTaRS" id="Ints4">
    <property type="organism name" value="mouse"/>
</dbReference>
<dbReference type="PRO" id="PR:Q8CIM8"/>
<dbReference type="Proteomes" id="UP000000589">
    <property type="component" value="Chromosome 7"/>
</dbReference>
<dbReference type="RNAct" id="Q8CIM8">
    <property type="molecule type" value="protein"/>
</dbReference>
<dbReference type="Bgee" id="ENSMUSG00000025133">
    <property type="expression patterns" value="Expressed in dorsal pancreas and 256 other cell types or tissues"/>
</dbReference>
<dbReference type="ExpressionAtlas" id="Q8CIM8">
    <property type="expression patterns" value="baseline and differential"/>
</dbReference>
<dbReference type="GO" id="GO:0005737">
    <property type="term" value="C:cytoplasm"/>
    <property type="evidence" value="ECO:0000250"/>
    <property type="project" value="UniProtKB"/>
</dbReference>
<dbReference type="GO" id="GO:0160232">
    <property type="term" value="C:INTAC complex"/>
    <property type="evidence" value="ECO:0000250"/>
    <property type="project" value="UniProtKB"/>
</dbReference>
<dbReference type="GO" id="GO:0032039">
    <property type="term" value="C:integrator complex"/>
    <property type="evidence" value="ECO:0000250"/>
    <property type="project" value="HGNC"/>
</dbReference>
<dbReference type="GO" id="GO:0005730">
    <property type="term" value="C:nucleolus"/>
    <property type="evidence" value="ECO:0007669"/>
    <property type="project" value="Ensembl"/>
</dbReference>
<dbReference type="GO" id="GO:0005634">
    <property type="term" value="C:nucleus"/>
    <property type="evidence" value="ECO:0000250"/>
    <property type="project" value="UniProtKB"/>
</dbReference>
<dbReference type="GO" id="GO:0030674">
    <property type="term" value="F:protein-macromolecule adaptor activity"/>
    <property type="evidence" value="ECO:0000250"/>
    <property type="project" value="UniProtKB"/>
</dbReference>
<dbReference type="GO" id="GO:0160240">
    <property type="term" value="P:RNA polymerase II transcription initiation surveillance"/>
    <property type="evidence" value="ECO:0000250"/>
    <property type="project" value="UniProtKB"/>
</dbReference>
<dbReference type="GO" id="GO:0016180">
    <property type="term" value="P:snRNA processing"/>
    <property type="evidence" value="ECO:0000250"/>
    <property type="project" value="HGNC"/>
</dbReference>
<dbReference type="FunFam" id="1.25.10.10:FF:000134">
    <property type="entry name" value="Integrator complex subunit 4"/>
    <property type="match status" value="1"/>
</dbReference>
<dbReference type="FunFam" id="1.25.10.10:FF:000634">
    <property type="entry name" value="integrator complex subunit 4 isoform X2"/>
    <property type="match status" value="1"/>
</dbReference>
<dbReference type="Gene3D" id="1.25.10.10">
    <property type="entry name" value="Leucine-rich Repeat Variant"/>
    <property type="match status" value="3"/>
</dbReference>
<dbReference type="InterPro" id="IPR011989">
    <property type="entry name" value="ARM-like"/>
</dbReference>
<dbReference type="InterPro" id="IPR016024">
    <property type="entry name" value="ARM-type_fold"/>
</dbReference>
<dbReference type="InterPro" id="IPR056235">
    <property type="entry name" value="INTS4_8HBD"/>
</dbReference>
<dbReference type="PANTHER" id="PTHR20938">
    <property type="entry name" value="INTEGRATOR COMPLEX SUBUNIT 4"/>
    <property type="match status" value="1"/>
</dbReference>
<dbReference type="PANTHER" id="PTHR20938:SF0">
    <property type="entry name" value="INTEGRATOR COMPLEX SUBUNIT 4"/>
    <property type="match status" value="1"/>
</dbReference>
<dbReference type="Pfam" id="PF13646">
    <property type="entry name" value="HEAT_2"/>
    <property type="match status" value="1"/>
</dbReference>
<dbReference type="Pfam" id="PF24493">
    <property type="entry name" value="INTS4_8HBD"/>
    <property type="match status" value="1"/>
</dbReference>
<dbReference type="Pfam" id="PF25458">
    <property type="entry name" value="INTS4_C"/>
    <property type="match status" value="1"/>
</dbReference>
<dbReference type="Pfam" id="PF20168">
    <property type="entry name" value="PDS5"/>
    <property type="match status" value="1"/>
</dbReference>
<dbReference type="SUPFAM" id="SSF48371">
    <property type="entry name" value="ARM repeat"/>
    <property type="match status" value="1"/>
</dbReference>
<sequence length="964" mass="108193">MAAHLKKRVYEEFTKVVQQQQEEIATKKLRLTKPSKSAALHIDLCKATSPADALQYLLQFARKPVEAESVEGVVRILLEHYYKENDPSVRLKIASLLGLLSKTAGFSPDCIMDDAINILQNEKSHQVLAQLLDTLLAIGSKLPENQATQVRLVDVACKHLTDTSHGVRNKCLQLLGNLGSLEKSVTKDTEGSAARDVQKIIGDHFSDQDPRVRTAAIKAMLQLHERGLKLHQTIYNQACKLLSDDYEQVRSAAVQLIWVVSQLYPESIVPIPSSNEEIRLVDDAFGKICHMVSDGSWVVRVQAAKLLGSMEQVSSHFLEQTLDKKLMSDLRRKRTAHERAKELYSSGEFSSGRKWGDDAPKEEIDTGAVNLIESGACGAFVHGLEDEMYEVRIAAVEALCMLAQSSPSFAEKCLDFLVDMFNDEIEEVRLQSIHTMRKISNNITLREDQLDTVLAVLEDSSRDIREALHELLCCTNVSTKEGIHLALVELLKNLTKYPTDRDSIWKCLKFLGSRHPTLVLPLVPELLSTHPFFDTAEPDMDDPAYIAVLVLIFNAAKTCPTMPALFSDHTLRHYAYLRDSLSHLVPALRLPGRKLVSSTVPSNITPHEDPSQQFLQQSLERVYSVQHLDPQGAQELLEFTIRDLQRLGELQSELAGVADFSATYLQCQLLLIKALQEKLWNVAAPLYLKQSDLASAAAKQIMEETYKMEFMYSGVENKQVVIIQHMRLQAKALQLIVTARTTRGVDPLFGMCEKFLQEVDFFQRCFIADLPHLQDSFVDKLLDLMPRLMASKPVEVIKILQTMLRQSTFLHLPLPEQIHKASATIIEPAGESDNPLRFTSGLVVALDVDATLEHVQDPQNTVKVQVLYPDGQAQMIHPKPADFRNPGPGRHRLLTQVYLSHTAWTEPCQVEVRLLLAYNSGARIPKSPWLEGSEMSPQVETSIEGTIPFSKPVKVYIMPKPARR</sequence>
<name>INT4_MOUSE</name>
<gene>
    <name type="primary">Ints4</name>
</gene>
<keyword id="KW-0007">Acetylation</keyword>
<keyword id="KW-0025">Alternative splicing</keyword>
<keyword id="KW-0963">Cytoplasm</keyword>
<keyword id="KW-1017">Isopeptide bond</keyword>
<keyword id="KW-0539">Nucleus</keyword>
<keyword id="KW-1185">Reference proteome</keyword>
<keyword id="KW-0677">Repeat</keyword>
<keyword id="KW-0832">Ubl conjugation</keyword>
<reference key="1">
    <citation type="journal article" date="2005" name="Science">
        <title>The transcriptional landscape of the mammalian genome.</title>
        <authorList>
            <person name="Carninci P."/>
            <person name="Kasukawa T."/>
            <person name="Katayama S."/>
            <person name="Gough J."/>
            <person name="Frith M.C."/>
            <person name="Maeda N."/>
            <person name="Oyama R."/>
            <person name="Ravasi T."/>
            <person name="Lenhard B."/>
            <person name="Wells C."/>
            <person name="Kodzius R."/>
            <person name="Shimokawa K."/>
            <person name="Bajic V.B."/>
            <person name="Brenner S.E."/>
            <person name="Batalov S."/>
            <person name="Forrest A.R."/>
            <person name="Zavolan M."/>
            <person name="Davis M.J."/>
            <person name="Wilming L.G."/>
            <person name="Aidinis V."/>
            <person name="Allen J.E."/>
            <person name="Ambesi-Impiombato A."/>
            <person name="Apweiler R."/>
            <person name="Aturaliya R.N."/>
            <person name="Bailey T.L."/>
            <person name="Bansal M."/>
            <person name="Baxter L."/>
            <person name="Beisel K.W."/>
            <person name="Bersano T."/>
            <person name="Bono H."/>
            <person name="Chalk A.M."/>
            <person name="Chiu K.P."/>
            <person name="Choudhary V."/>
            <person name="Christoffels A."/>
            <person name="Clutterbuck D.R."/>
            <person name="Crowe M.L."/>
            <person name="Dalla E."/>
            <person name="Dalrymple B.P."/>
            <person name="de Bono B."/>
            <person name="Della Gatta G."/>
            <person name="di Bernardo D."/>
            <person name="Down T."/>
            <person name="Engstrom P."/>
            <person name="Fagiolini M."/>
            <person name="Faulkner G."/>
            <person name="Fletcher C.F."/>
            <person name="Fukushima T."/>
            <person name="Furuno M."/>
            <person name="Futaki S."/>
            <person name="Gariboldi M."/>
            <person name="Georgii-Hemming P."/>
            <person name="Gingeras T.R."/>
            <person name="Gojobori T."/>
            <person name="Green R.E."/>
            <person name="Gustincich S."/>
            <person name="Harbers M."/>
            <person name="Hayashi Y."/>
            <person name="Hensch T.K."/>
            <person name="Hirokawa N."/>
            <person name="Hill D."/>
            <person name="Huminiecki L."/>
            <person name="Iacono M."/>
            <person name="Ikeo K."/>
            <person name="Iwama A."/>
            <person name="Ishikawa T."/>
            <person name="Jakt M."/>
            <person name="Kanapin A."/>
            <person name="Katoh M."/>
            <person name="Kawasawa Y."/>
            <person name="Kelso J."/>
            <person name="Kitamura H."/>
            <person name="Kitano H."/>
            <person name="Kollias G."/>
            <person name="Krishnan S.P."/>
            <person name="Kruger A."/>
            <person name="Kummerfeld S.K."/>
            <person name="Kurochkin I.V."/>
            <person name="Lareau L.F."/>
            <person name="Lazarevic D."/>
            <person name="Lipovich L."/>
            <person name="Liu J."/>
            <person name="Liuni S."/>
            <person name="McWilliam S."/>
            <person name="Madan Babu M."/>
            <person name="Madera M."/>
            <person name="Marchionni L."/>
            <person name="Matsuda H."/>
            <person name="Matsuzawa S."/>
            <person name="Miki H."/>
            <person name="Mignone F."/>
            <person name="Miyake S."/>
            <person name="Morris K."/>
            <person name="Mottagui-Tabar S."/>
            <person name="Mulder N."/>
            <person name="Nakano N."/>
            <person name="Nakauchi H."/>
            <person name="Ng P."/>
            <person name="Nilsson R."/>
            <person name="Nishiguchi S."/>
            <person name="Nishikawa S."/>
            <person name="Nori F."/>
            <person name="Ohara O."/>
            <person name="Okazaki Y."/>
            <person name="Orlando V."/>
            <person name="Pang K.C."/>
            <person name="Pavan W.J."/>
            <person name="Pavesi G."/>
            <person name="Pesole G."/>
            <person name="Petrovsky N."/>
            <person name="Piazza S."/>
            <person name="Reed J."/>
            <person name="Reid J.F."/>
            <person name="Ring B.Z."/>
            <person name="Ringwald M."/>
            <person name="Rost B."/>
            <person name="Ruan Y."/>
            <person name="Salzberg S.L."/>
            <person name="Sandelin A."/>
            <person name="Schneider C."/>
            <person name="Schoenbach C."/>
            <person name="Sekiguchi K."/>
            <person name="Semple C.A."/>
            <person name="Seno S."/>
            <person name="Sessa L."/>
            <person name="Sheng Y."/>
            <person name="Shibata Y."/>
            <person name="Shimada H."/>
            <person name="Shimada K."/>
            <person name="Silva D."/>
            <person name="Sinclair B."/>
            <person name="Sperling S."/>
            <person name="Stupka E."/>
            <person name="Sugiura K."/>
            <person name="Sultana R."/>
            <person name="Takenaka Y."/>
            <person name="Taki K."/>
            <person name="Tammoja K."/>
            <person name="Tan S.L."/>
            <person name="Tang S."/>
            <person name="Taylor M.S."/>
            <person name="Tegner J."/>
            <person name="Teichmann S.A."/>
            <person name="Ueda H.R."/>
            <person name="van Nimwegen E."/>
            <person name="Verardo R."/>
            <person name="Wei C.L."/>
            <person name="Yagi K."/>
            <person name="Yamanishi H."/>
            <person name="Zabarovsky E."/>
            <person name="Zhu S."/>
            <person name="Zimmer A."/>
            <person name="Hide W."/>
            <person name="Bult C."/>
            <person name="Grimmond S.M."/>
            <person name="Teasdale R.D."/>
            <person name="Liu E.T."/>
            <person name="Brusic V."/>
            <person name="Quackenbush J."/>
            <person name="Wahlestedt C."/>
            <person name="Mattick J.S."/>
            <person name="Hume D.A."/>
            <person name="Kai C."/>
            <person name="Sasaki D."/>
            <person name="Tomaru Y."/>
            <person name="Fukuda S."/>
            <person name="Kanamori-Katayama M."/>
            <person name="Suzuki M."/>
            <person name="Aoki J."/>
            <person name="Arakawa T."/>
            <person name="Iida J."/>
            <person name="Imamura K."/>
            <person name="Itoh M."/>
            <person name="Kato T."/>
            <person name="Kawaji H."/>
            <person name="Kawagashira N."/>
            <person name="Kawashima T."/>
            <person name="Kojima M."/>
            <person name="Kondo S."/>
            <person name="Konno H."/>
            <person name="Nakano K."/>
            <person name="Ninomiya N."/>
            <person name="Nishio T."/>
            <person name="Okada M."/>
            <person name="Plessy C."/>
            <person name="Shibata K."/>
            <person name="Shiraki T."/>
            <person name="Suzuki S."/>
            <person name="Tagami M."/>
            <person name="Waki K."/>
            <person name="Watahiki A."/>
            <person name="Okamura-Oho Y."/>
            <person name="Suzuki H."/>
            <person name="Kawai J."/>
            <person name="Hayashizaki Y."/>
        </authorList>
    </citation>
    <scope>NUCLEOTIDE SEQUENCE [LARGE SCALE MRNA] (ISOFORMS 2 AND 3)</scope>
    <scope>NUCLEOTIDE SEQUENCE [LARGE SCALE MRNA] OF 622-964 (ISOFORM 1)</scope>
    <source>
        <strain>C57BL/6J</strain>
        <strain>NOD</strain>
        <tissue>Thymus</tissue>
    </source>
</reference>
<reference key="2">
    <citation type="journal article" date="2004" name="Genome Res.">
        <title>The status, quality, and expansion of the NIH full-length cDNA project: the Mammalian Gene Collection (MGC).</title>
        <authorList>
            <consortium name="The MGC Project Team"/>
        </authorList>
    </citation>
    <scope>NUCLEOTIDE SEQUENCE [LARGE SCALE MRNA] (ISOFORM 1)</scope>
    <source>
        <strain>FVB/N</strain>
        <tissue>Mammary tumor</tissue>
    </source>
</reference>
<reference key="3">
    <citation type="journal article" date="2010" name="Cell">
        <title>A tissue-specific atlas of mouse protein phosphorylation and expression.</title>
        <authorList>
            <person name="Huttlin E.L."/>
            <person name="Jedrychowski M.P."/>
            <person name="Elias J.E."/>
            <person name="Goswami T."/>
            <person name="Rad R."/>
            <person name="Beausoleil S.A."/>
            <person name="Villen J."/>
            <person name="Haas W."/>
            <person name="Sowa M.E."/>
            <person name="Gygi S.P."/>
        </authorList>
    </citation>
    <scope>IDENTIFICATION BY MASS SPECTROMETRY [LARGE SCALE ANALYSIS]</scope>
    <source>
        <tissue>Liver</tissue>
        <tissue>Pancreas</tissue>
        <tissue>Spleen</tissue>
        <tissue>Testis</tissue>
    </source>
</reference>
<reference key="4">
    <citation type="journal article" date="2013" name="Mol. Cell">
        <title>SIRT5-mediated lysine desuccinylation impacts diverse metabolic pathways.</title>
        <authorList>
            <person name="Park J."/>
            <person name="Chen Y."/>
            <person name="Tishkoff D.X."/>
            <person name="Peng C."/>
            <person name="Tan M."/>
            <person name="Dai L."/>
            <person name="Xie Z."/>
            <person name="Zhang Y."/>
            <person name="Zwaans B.M."/>
            <person name="Skinner M.E."/>
            <person name="Lombard D.B."/>
            <person name="Zhao Y."/>
        </authorList>
    </citation>
    <scope>ACETYLATION [LARGE SCALE ANALYSIS] AT LYS-27</scope>
    <scope>IDENTIFICATION BY MASS SPECTROMETRY [LARGE SCALE ANALYSIS]</scope>
    <source>
        <tissue>Embryonic fibroblast</tissue>
    </source>
</reference>
<accession>Q8CIM8</accession>
<accession>Q3TQQ4</accession>
<accession>Q8C2H1</accession>
<accession>Q91YV5</accession>
<accession>Q9CSY4</accession>
<evidence type="ECO:0000250" key="1">
    <source>
        <dbReference type="UniProtKB" id="Q96HW7"/>
    </source>
</evidence>
<evidence type="ECO:0000303" key="2">
    <source>
    </source>
</evidence>
<evidence type="ECO:0000305" key="3"/>
<evidence type="ECO:0007744" key="4">
    <source>
    </source>
</evidence>